<feature type="chain" id="PRO_0000164322" description="Protein NrdI">
    <location>
        <begin position="1"/>
        <end position="149"/>
    </location>
</feature>
<keyword id="KW-1185">Reference proteome</keyword>
<name>NRDI_MALP2</name>
<accession>Q8EWW3</accession>
<gene>
    <name evidence="1" type="primary">nrdI</name>
    <name type="ordered locus">MYPE860</name>
</gene>
<sequence>MENKRFFIVYYSSKSNNTHRFMLKLNCKCLRLPIEQKDEPDEILESKIPTVNHPFILLTPTYAGGLGKLKGAVPKPVKKFLNNPVNRNNCKAVIASGNTNFNDTYCIAGDIISQKLQIPFLYKFELLGTNSDVENVIKIGNEFWEKNNF</sequence>
<organism>
    <name type="scientific">Malacoplasma penetrans (strain HF-2)</name>
    <name type="common">Mycoplasma penetrans</name>
    <dbReference type="NCBI Taxonomy" id="272633"/>
    <lineage>
        <taxon>Bacteria</taxon>
        <taxon>Bacillati</taxon>
        <taxon>Mycoplasmatota</taxon>
        <taxon>Mycoplasmoidales</taxon>
        <taxon>Mycoplasmoidaceae</taxon>
        <taxon>Malacoplasma</taxon>
    </lineage>
</organism>
<proteinExistence type="inferred from homology"/>
<dbReference type="EMBL" id="BA000026">
    <property type="protein sequence ID" value="BAC43877.1"/>
    <property type="molecule type" value="Genomic_DNA"/>
</dbReference>
<dbReference type="RefSeq" id="WP_011076913.1">
    <property type="nucleotide sequence ID" value="NC_004432.1"/>
</dbReference>
<dbReference type="SMR" id="Q8EWW3"/>
<dbReference type="FunCoup" id="Q8EWW3">
    <property type="interactions" value="16"/>
</dbReference>
<dbReference type="STRING" id="272633.gene:10731178"/>
<dbReference type="KEGG" id="mpe:MYPE860"/>
<dbReference type="eggNOG" id="COG1780">
    <property type="taxonomic scope" value="Bacteria"/>
</dbReference>
<dbReference type="HOGENOM" id="CLU_114845_0_0_14"/>
<dbReference type="InParanoid" id="Q8EWW3"/>
<dbReference type="Proteomes" id="UP000002522">
    <property type="component" value="Chromosome"/>
</dbReference>
<dbReference type="GO" id="GO:0010181">
    <property type="term" value="F:FMN binding"/>
    <property type="evidence" value="ECO:0007669"/>
    <property type="project" value="InterPro"/>
</dbReference>
<dbReference type="GO" id="GO:0036211">
    <property type="term" value="P:protein modification process"/>
    <property type="evidence" value="ECO:0007669"/>
    <property type="project" value="InterPro"/>
</dbReference>
<dbReference type="Gene3D" id="3.40.50.360">
    <property type="match status" value="1"/>
</dbReference>
<dbReference type="HAMAP" id="MF_00128">
    <property type="entry name" value="NrdI"/>
    <property type="match status" value="1"/>
</dbReference>
<dbReference type="InterPro" id="IPR029039">
    <property type="entry name" value="Flavoprotein-like_sf"/>
</dbReference>
<dbReference type="InterPro" id="IPR020852">
    <property type="entry name" value="RNR_Ib_NrdI_bac"/>
</dbReference>
<dbReference type="InterPro" id="IPR004465">
    <property type="entry name" value="RNR_NrdI"/>
</dbReference>
<dbReference type="NCBIfam" id="TIGR00333">
    <property type="entry name" value="nrdI"/>
    <property type="match status" value="1"/>
</dbReference>
<dbReference type="PANTHER" id="PTHR37297">
    <property type="entry name" value="PROTEIN NRDI"/>
    <property type="match status" value="1"/>
</dbReference>
<dbReference type="PANTHER" id="PTHR37297:SF1">
    <property type="entry name" value="PROTEIN NRDI"/>
    <property type="match status" value="1"/>
</dbReference>
<dbReference type="Pfam" id="PF07972">
    <property type="entry name" value="Flavodoxin_NdrI"/>
    <property type="match status" value="1"/>
</dbReference>
<dbReference type="PIRSF" id="PIRSF005087">
    <property type="entry name" value="NrdI"/>
    <property type="match status" value="1"/>
</dbReference>
<dbReference type="SUPFAM" id="SSF52218">
    <property type="entry name" value="Flavoproteins"/>
    <property type="match status" value="1"/>
</dbReference>
<comment type="function">
    <text evidence="1">Probably involved in ribonucleotide reductase function.</text>
</comment>
<comment type="similarity">
    <text evidence="1">Belongs to the NrdI family.</text>
</comment>
<reference key="1">
    <citation type="journal article" date="2002" name="Nucleic Acids Res.">
        <title>The complete genomic sequence of Mycoplasma penetrans, an intracellular bacterial pathogen in humans.</title>
        <authorList>
            <person name="Sasaki Y."/>
            <person name="Ishikawa J."/>
            <person name="Yamashita A."/>
            <person name="Oshima K."/>
            <person name="Kenri T."/>
            <person name="Furuya K."/>
            <person name="Yoshino C."/>
            <person name="Horino A."/>
            <person name="Shiba T."/>
            <person name="Sasaki T."/>
            <person name="Hattori M."/>
        </authorList>
    </citation>
    <scope>NUCLEOTIDE SEQUENCE [LARGE SCALE GENOMIC DNA]</scope>
    <source>
        <strain>HF-2</strain>
    </source>
</reference>
<evidence type="ECO:0000255" key="1">
    <source>
        <dbReference type="HAMAP-Rule" id="MF_00128"/>
    </source>
</evidence>
<protein>
    <recommendedName>
        <fullName evidence="1">Protein NrdI</fullName>
    </recommendedName>
</protein>